<evidence type="ECO:0000255" key="1">
    <source>
        <dbReference type="HAMAP-Rule" id="MF_00693"/>
    </source>
</evidence>
<evidence type="ECO:0000305" key="2"/>
<feature type="chain" id="PRO_0000257119" description="Probable transcriptional regulatory protein Rru_A1086">
    <location>
        <begin position="1"/>
        <end position="249"/>
    </location>
</feature>
<accession>Q2RVF8</accession>
<keyword id="KW-0963">Cytoplasm</keyword>
<keyword id="KW-0238">DNA-binding</keyword>
<keyword id="KW-1185">Reference proteome</keyword>
<keyword id="KW-0804">Transcription</keyword>
<keyword id="KW-0805">Transcription regulation</keyword>
<proteinExistence type="inferred from homology"/>
<comment type="subcellular location">
    <subcellularLocation>
        <location evidence="1">Cytoplasm</location>
    </subcellularLocation>
</comment>
<comment type="similarity">
    <text evidence="1">Belongs to the TACO1 family.</text>
</comment>
<comment type="sequence caution" evidence="2">
    <conflict type="erroneous initiation">
        <sequence resource="EMBL-CDS" id="ABC21887"/>
    </conflict>
</comment>
<protein>
    <recommendedName>
        <fullName evidence="1">Probable transcriptional regulatory protein Rru_A1086</fullName>
    </recommendedName>
</protein>
<reference key="1">
    <citation type="journal article" date="2011" name="Stand. Genomic Sci.">
        <title>Complete genome sequence of Rhodospirillum rubrum type strain (S1).</title>
        <authorList>
            <person name="Munk A.C."/>
            <person name="Copeland A."/>
            <person name="Lucas S."/>
            <person name="Lapidus A."/>
            <person name="Del Rio T.G."/>
            <person name="Barry K."/>
            <person name="Detter J.C."/>
            <person name="Hammon N."/>
            <person name="Israni S."/>
            <person name="Pitluck S."/>
            <person name="Brettin T."/>
            <person name="Bruce D."/>
            <person name="Han C."/>
            <person name="Tapia R."/>
            <person name="Gilna P."/>
            <person name="Schmutz J."/>
            <person name="Larimer F."/>
            <person name="Land M."/>
            <person name="Kyrpides N.C."/>
            <person name="Mavromatis K."/>
            <person name="Richardson P."/>
            <person name="Rohde M."/>
            <person name="Goeker M."/>
            <person name="Klenk H.P."/>
            <person name="Zhang Y."/>
            <person name="Roberts G.P."/>
            <person name="Reslewic S."/>
            <person name="Schwartz D.C."/>
        </authorList>
    </citation>
    <scope>NUCLEOTIDE SEQUENCE [LARGE SCALE GENOMIC DNA]</scope>
    <source>
        <strain>ATCC 11170 / ATH 1.1.1 / DSM 467 / LMG 4362 / NCIMB 8255 / S1</strain>
    </source>
</reference>
<gene>
    <name type="ordered locus">Rru_A1086</name>
</gene>
<dbReference type="EMBL" id="CP000230">
    <property type="protein sequence ID" value="ABC21887.1"/>
    <property type="status" value="ALT_INIT"/>
    <property type="molecule type" value="Genomic_DNA"/>
</dbReference>
<dbReference type="RefSeq" id="WP_011388841.1">
    <property type="nucleotide sequence ID" value="NC_007643.1"/>
</dbReference>
<dbReference type="RefSeq" id="YP_426174.2">
    <property type="nucleotide sequence ID" value="NC_007643.1"/>
</dbReference>
<dbReference type="SMR" id="Q2RVF8"/>
<dbReference type="STRING" id="269796.Rru_A1086"/>
<dbReference type="EnsemblBacteria" id="ABC21887">
    <property type="protein sequence ID" value="ABC21887"/>
    <property type="gene ID" value="Rru_A1086"/>
</dbReference>
<dbReference type="KEGG" id="rru:Rru_A1086"/>
<dbReference type="PATRIC" id="fig|269796.9.peg.1144"/>
<dbReference type="eggNOG" id="COG0217">
    <property type="taxonomic scope" value="Bacteria"/>
</dbReference>
<dbReference type="HOGENOM" id="CLU_062974_2_2_5"/>
<dbReference type="PhylomeDB" id="Q2RVF8"/>
<dbReference type="Proteomes" id="UP000001929">
    <property type="component" value="Chromosome"/>
</dbReference>
<dbReference type="GO" id="GO:0005829">
    <property type="term" value="C:cytosol"/>
    <property type="evidence" value="ECO:0007669"/>
    <property type="project" value="TreeGrafter"/>
</dbReference>
<dbReference type="GO" id="GO:0003677">
    <property type="term" value="F:DNA binding"/>
    <property type="evidence" value="ECO:0007669"/>
    <property type="project" value="UniProtKB-UniRule"/>
</dbReference>
<dbReference type="GO" id="GO:0006355">
    <property type="term" value="P:regulation of DNA-templated transcription"/>
    <property type="evidence" value="ECO:0007669"/>
    <property type="project" value="UniProtKB-UniRule"/>
</dbReference>
<dbReference type="FunFam" id="1.10.10.200:FF:000002">
    <property type="entry name" value="Probable transcriptional regulatory protein CLM62_37755"/>
    <property type="match status" value="1"/>
</dbReference>
<dbReference type="Gene3D" id="1.10.10.200">
    <property type="match status" value="1"/>
</dbReference>
<dbReference type="Gene3D" id="3.30.70.980">
    <property type="match status" value="2"/>
</dbReference>
<dbReference type="HAMAP" id="MF_00693">
    <property type="entry name" value="Transcrip_reg_TACO1"/>
    <property type="match status" value="1"/>
</dbReference>
<dbReference type="InterPro" id="IPR017856">
    <property type="entry name" value="Integrase-like_N"/>
</dbReference>
<dbReference type="InterPro" id="IPR048300">
    <property type="entry name" value="TACO1_YebC-like_2nd/3rd_dom"/>
</dbReference>
<dbReference type="InterPro" id="IPR049083">
    <property type="entry name" value="TACO1_YebC_N"/>
</dbReference>
<dbReference type="InterPro" id="IPR002876">
    <property type="entry name" value="Transcrip_reg_TACO1-like"/>
</dbReference>
<dbReference type="InterPro" id="IPR026564">
    <property type="entry name" value="Transcrip_reg_TACO1-like_dom3"/>
</dbReference>
<dbReference type="InterPro" id="IPR029072">
    <property type="entry name" value="YebC-like"/>
</dbReference>
<dbReference type="NCBIfam" id="NF001030">
    <property type="entry name" value="PRK00110.1"/>
    <property type="match status" value="1"/>
</dbReference>
<dbReference type="NCBIfam" id="NF009044">
    <property type="entry name" value="PRK12378.1"/>
    <property type="match status" value="1"/>
</dbReference>
<dbReference type="NCBIfam" id="TIGR01033">
    <property type="entry name" value="YebC/PmpR family DNA-binding transcriptional regulator"/>
    <property type="match status" value="1"/>
</dbReference>
<dbReference type="PANTHER" id="PTHR12532:SF6">
    <property type="entry name" value="TRANSCRIPTIONAL REGULATORY PROTEIN YEBC-RELATED"/>
    <property type="match status" value="1"/>
</dbReference>
<dbReference type="PANTHER" id="PTHR12532">
    <property type="entry name" value="TRANSLATIONAL ACTIVATOR OF CYTOCHROME C OXIDASE 1"/>
    <property type="match status" value="1"/>
</dbReference>
<dbReference type="Pfam" id="PF20772">
    <property type="entry name" value="TACO1_YebC_N"/>
    <property type="match status" value="1"/>
</dbReference>
<dbReference type="Pfam" id="PF01709">
    <property type="entry name" value="Transcrip_reg"/>
    <property type="match status" value="1"/>
</dbReference>
<dbReference type="SUPFAM" id="SSF75625">
    <property type="entry name" value="YebC-like"/>
    <property type="match status" value="1"/>
</dbReference>
<sequence length="249" mass="26604">MAGHSQFKNIMHRKGGQDAKRAQLFTKLAREITVSAKLGSPDPNANPRLRAAILAARAQSLPKDNIQRAIDKATSGGDAANLEELRYEGYGPGNVAVIVECLTDNRNRTASEVRTAFSKNGGTMGESGSVAFNFERVGLIHYPLKAGAADAVLDAGIEAGADDVQSSEDGHDITCRPDDLNAVSKALEAALGDPEFARLDWKPLVQVPVDADTVPALMKFLDILDDCDDVQRVAANYEIDDAIMEKLGA</sequence>
<name>Y1086_RHORT</name>
<organism>
    <name type="scientific">Rhodospirillum rubrum (strain ATCC 11170 / ATH 1.1.1 / DSM 467 / LMG 4362 / NCIMB 8255 / S1)</name>
    <dbReference type="NCBI Taxonomy" id="269796"/>
    <lineage>
        <taxon>Bacteria</taxon>
        <taxon>Pseudomonadati</taxon>
        <taxon>Pseudomonadota</taxon>
        <taxon>Alphaproteobacteria</taxon>
        <taxon>Rhodospirillales</taxon>
        <taxon>Rhodospirillaceae</taxon>
        <taxon>Rhodospirillum</taxon>
    </lineage>
</organism>